<sequence length="80" mass="8744">MARKKASLDFEQSLADLQALVERLENGELSLEESLAAFEQGIALTRDCQGALAQAEQKVQILLERDGELAAQPFDAEPDV</sequence>
<protein>
    <recommendedName>
        <fullName evidence="1">Exodeoxyribonuclease 7 small subunit</fullName>
        <ecNumber evidence="1">3.1.11.6</ecNumber>
    </recommendedName>
    <alternativeName>
        <fullName evidence="1">Exodeoxyribonuclease VII small subunit</fullName>
        <shortName evidence="1">Exonuclease VII small subunit</shortName>
    </alternativeName>
</protein>
<feature type="chain" id="PRO_1000079289" description="Exodeoxyribonuclease 7 small subunit">
    <location>
        <begin position="1"/>
        <end position="80"/>
    </location>
</feature>
<organism>
    <name type="scientific">Pseudomonas putida (strain GB-1)</name>
    <dbReference type="NCBI Taxonomy" id="76869"/>
    <lineage>
        <taxon>Bacteria</taxon>
        <taxon>Pseudomonadati</taxon>
        <taxon>Pseudomonadota</taxon>
        <taxon>Gammaproteobacteria</taxon>
        <taxon>Pseudomonadales</taxon>
        <taxon>Pseudomonadaceae</taxon>
        <taxon>Pseudomonas</taxon>
    </lineage>
</organism>
<comment type="function">
    <text evidence="1">Bidirectionally degrades single-stranded DNA into large acid-insoluble oligonucleotides, which are then degraded further into small acid-soluble oligonucleotides.</text>
</comment>
<comment type="catalytic activity">
    <reaction evidence="1">
        <text>Exonucleolytic cleavage in either 5'- to 3'- or 3'- to 5'-direction to yield nucleoside 5'-phosphates.</text>
        <dbReference type="EC" id="3.1.11.6"/>
    </reaction>
</comment>
<comment type="subunit">
    <text evidence="1">Heterooligomer composed of large and small subunits.</text>
</comment>
<comment type="subcellular location">
    <subcellularLocation>
        <location evidence="1">Cytoplasm</location>
    </subcellularLocation>
</comment>
<comment type="similarity">
    <text evidence="1">Belongs to the XseB family.</text>
</comment>
<dbReference type="EC" id="3.1.11.6" evidence="1"/>
<dbReference type="EMBL" id="CP000926">
    <property type="protein sequence ID" value="ABY96485.1"/>
    <property type="molecule type" value="Genomic_DNA"/>
</dbReference>
<dbReference type="RefSeq" id="WP_012270297.1">
    <property type="nucleotide sequence ID" value="NC_010322.1"/>
</dbReference>
<dbReference type="SMR" id="B0KL81"/>
<dbReference type="KEGG" id="ppg:PputGB1_0574"/>
<dbReference type="eggNOG" id="COG1722">
    <property type="taxonomic scope" value="Bacteria"/>
</dbReference>
<dbReference type="HOGENOM" id="CLU_145918_3_3_6"/>
<dbReference type="Proteomes" id="UP000002157">
    <property type="component" value="Chromosome"/>
</dbReference>
<dbReference type="GO" id="GO:0005829">
    <property type="term" value="C:cytosol"/>
    <property type="evidence" value="ECO:0007669"/>
    <property type="project" value="TreeGrafter"/>
</dbReference>
<dbReference type="GO" id="GO:0009318">
    <property type="term" value="C:exodeoxyribonuclease VII complex"/>
    <property type="evidence" value="ECO:0007669"/>
    <property type="project" value="InterPro"/>
</dbReference>
<dbReference type="GO" id="GO:0008855">
    <property type="term" value="F:exodeoxyribonuclease VII activity"/>
    <property type="evidence" value="ECO:0007669"/>
    <property type="project" value="UniProtKB-UniRule"/>
</dbReference>
<dbReference type="GO" id="GO:0006308">
    <property type="term" value="P:DNA catabolic process"/>
    <property type="evidence" value="ECO:0007669"/>
    <property type="project" value="UniProtKB-UniRule"/>
</dbReference>
<dbReference type="Gene3D" id="1.10.287.1040">
    <property type="entry name" value="Exonuclease VII, small subunit"/>
    <property type="match status" value="1"/>
</dbReference>
<dbReference type="HAMAP" id="MF_00337">
    <property type="entry name" value="Exonuc_7_S"/>
    <property type="match status" value="1"/>
</dbReference>
<dbReference type="InterPro" id="IPR003761">
    <property type="entry name" value="Exonuc_VII_S"/>
</dbReference>
<dbReference type="InterPro" id="IPR037004">
    <property type="entry name" value="Exonuc_VII_ssu_sf"/>
</dbReference>
<dbReference type="NCBIfam" id="NF002140">
    <property type="entry name" value="PRK00977.1-4"/>
    <property type="match status" value="1"/>
</dbReference>
<dbReference type="NCBIfam" id="TIGR01280">
    <property type="entry name" value="xseB"/>
    <property type="match status" value="1"/>
</dbReference>
<dbReference type="PANTHER" id="PTHR34137">
    <property type="entry name" value="EXODEOXYRIBONUCLEASE 7 SMALL SUBUNIT"/>
    <property type="match status" value="1"/>
</dbReference>
<dbReference type="PANTHER" id="PTHR34137:SF1">
    <property type="entry name" value="EXODEOXYRIBONUCLEASE 7 SMALL SUBUNIT"/>
    <property type="match status" value="1"/>
</dbReference>
<dbReference type="Pfam" id="PF02609">
    <property type="entry name" value="Exonuc_VII_S"/>
    <property type="match status" value="1"/>
</dbReference>
<dbReference type="PIRSF" id="PIRSF006488">
    <property type="entry name" value="Exonuc_VII_S"/>
    <property type="match status" value="1"/>
</dbReference>
<dbReference type="SUPFAM" id="SSF116842">
    <property type="entry name" value="XseB-like"/>
    <property type="match status" value="1"/>
</dbReference>
<evidence type="ECO:0000255" key="1">
    <source>
        <dbReference type="HAMAP-Rule" id="MF_00337"/>
    </source>
</evidence>
<name>EX7S_PSEPG</name>
<accession>B0KL81</accession>
<reference key="1">
    <citation type="submission" date="2008-01" db="EMBL/GenBank/DDBJ databases">
        <title>Complete sequence of Pseudomonas putida GB-1.</title>
        <authorList>
            <consortium name="US DOE Joint Genome Institute"/>
            <person name="Copeland A."/>
            <person name="Lucas S."/>
            <person name="Lapidus A."/>
            <person name="Barry K."/>
            <person name="Glavina del Rio T."/>
            <person name="Dalin E."/>
            <person name="Tice H."/>
            <person name="Pitluck S."/>
            <person name="Bruce D."/>
            <person name="Goodwin L."/>
            <person name="Chertkov O."/>
            <person name="Brettin T."/>
            <person name="Detter J.C."/>
            <person name="Han C."/>
            <person name="Kuske C.R."/>
            <person name="Schmutz J."/>
            <person name="Larimer F."/>
            <person name="Land M."/>
            <person name="Hauser L."/>
            <person name="Kyrpides N."/>
            <person name="Kim E."/>
            <person name="McCarthy J.K."/>
            <person name="Richardson P."/>
        </authorList>
    </citation>
    <scope>NUCLEOTIDE SEQUENCE [LARGE SCALE GENOMIC DNA]</scope>
    <source>
        <strain>GB-1</strain>
    </source>
</reference>
<gene>
    <name evidence="1" type="primary">xseB</name>
    <name type="ordered locus">PputGB1_0574</name>
</gene>
<proteinExistence type="inferred from homology"/>
<keyword id="KW-0963">Cytoplasm</keyword>
<keyword id="KW-0269">Exonuclease</keyword>
<keyword id="KW-0378">Hydrolase</keyword>
<keyword id="KW-0540">Nuclease</keyword>